<proteinExistence type="inferred from homology"/>
<accession>P9WN76</accession>
<accession>L0TE49</accession>
<accession>P95113</accession>
<protein>
    <recommendedName>
        <fullName evidence="1">Glycerol-3-phosphate dehydrogenase [NAD(P)+] 2</fullName>
        <ecNumber evidence="1">1.1.1.94</ecNumber>
    </recommendedName>
    <alternativeName>
        <fullName evidence="1">NAD(P)(+)-dependent glycerol-3-phosphate dehydrogenase 2</fullName>
    </alternativeName>
    <alternativeName>
        <fullName evidence="1">NAD(P)H-dependent dihydroxyacetone-phosphate reductase 2</fullName>
    </alternativeName>
</protein>
<keyword id="KW-0963">Cytoplasm</keyword>
<keyword id="KW-0444">Lipid biosynthesis</keyword>
<keyword id="KW-0443">Lipid metabolism</keyword>
<keyword id="KW-0520">NAD</keyword>
<keyword id="KW-0521">NADP</keyword>
<keyword id="KW-0547">Nucleotide-binding</keyword>
<keyword id="KW-0560">Oxidoreductase</keyword>
<keyword id="KW-0594">Phospholipid biosynthesis</keyword>
<keyword id="KW-1208">Phospholipid metabolism</keyword>
<keyword id="KW-1185">Reference proteome</keyword>
<sequence length="334" mass="33966">MAGIASTVAVMGAGAWGTALAKVLADAGGEVTLWARRAEVADQINTTRYNPDYLPGALLPPSIHATADAEEALGGASTVLLGVPAQTMRANLERWAPLLPEGATLVSLAKGIELGTLMRMSQVIISVTGAEPAQVAVISGPNLASEIAECQPAATVVACSDSGRAVALQRALNSGYFRPYTNADVVGTEIGGACKNIIALACGMAVGIGLGENTAAAIITRGLAEIIRLGTALGANGATLAGLAGVGDLVATCTSPRSRNRSFGERLGRGETLQSAGKACHVVEGVTSCESVLALASSYDVEMPLTDAVHRVCHKGLSVDEAITLLLGRRTKPE</sequence>
<feature type="chain" id="PRO_0000427175" description="Glycerol-3-phosphate dehydrogenase [NAD(P)+] 2">
    <location>
        <begin position="1"/>
        <end position="334"/>
    </location>
</feature>
<feature type="active site" description="Proton acceptor" evidence="1">
    <location>
        <position position="195"/>
    </location>
</feature>
<feature type="binding site" evidence="1">
    <location>
        <position position="16"/>
    </location>
    <ligand>
        <name>NADPH</name>
        <dbReference type="ChEBI" id="CHEBI:57783"/>
    </ligand>
</feature>
<feature type="binding site" evidence="1">
    <location>
        <position position="36"/>
    </location>
    <ligand>
        <name>NADPH</name>
        <dbReference type="ChEBI" id="CHEBI:57783"/>
    </ligand>
</feature>
<feature type="binding site" evidence="1">
    <location>
        <position position="37"/>
    </location>
    <ligand>
        <name>NADPH</name>
        <dbReference type="ChEBI" id="CHEBI:57783"/>
    </ligand>
</feature>
<feature type="binding site" evidence="1">
    <location>
        <position position="110"/>
    </location>
    <ligand>
        <name>NADPH</name>
        <dbReference type="ChEBI" id="CHEBI:57783"/>
    </ligand>
</feature>
<feature type="binding site" evidence="1">
    <location>
        <position position="110"/>
    </location>
    <ligand>
        <name>sn-glycerol 3-phosphate</name>
        <dbReference type="ChEBI" id="CHEBI:57597"/>
    </ligand>
</feature>
<feature type="binding site" evidence="1">
    <location>
        <position position="140"/>
    </location>
    <ligand>
        <name>sn-glycerol 3-phosphate</name>
        <dbReference type="ChEBI" id="CHEBI:57597"/>
    </ligand>
</feature>
<feature type="binding site" evidence="1">
    <location>
        <position position="144"/>
    </location>
    <ligand>
        <name>NADPH</name>
        <dbReference type="ChEBI" id="CHEBI:57783"/>
    </ligand>
</feature>
<feature type="binding site" evidence="1">
    <location>
        <position position="195"/>
    </location>
    <ligand>
        <name>sn-glycerol 3-phosphate</name>
        <dbReference type="ChEBI" id="CHEBI:57597"/>
    </ligand>
</feature>
<feature type="binding site" evidence="1">
    <location>
        <position position="248"/>
    </location>
    <ligand>
        <name>sn-glycerol 3-phosphate</name>
        <dbReference type="ChEBI" id="CHEBI:57597"/>
    </ligand>
</feature>
<feature type="binding site" evidence="1">
    <location>
        <position position="258"/>
    </location>
    <ligand>
        <name>sn-glycerol 3-phosphate</name>
        <dbReference type="ChEBI" id="CHEBI:57597"/>
    </ligand>
</feature>
<feature type="binding site" evidence="1">
    <location>
        <position position="259"/>
    </location>
    <ligand>
        <name>NADPH</name>
        <dbReference type="ChEBI" id="CHEBI:57783"/>
    </ligand>
</feature>
<feature type="binding site" evidence="1">
    <location>
        <position position="259"/>
    </location>
    <ligand>
        <name>sn-glycerol 3-phosphate</name>
        <dbReference type="ChEBI" id="CHEBI:57597"/>
    </ligand>
</feature>
<feature type="binding site" evidence="1">
    <location>
        <position position="260"/>
    </location>
    <ligand>
        <name>sn-glycerol 3-phosphate</name>
        <dbReference type="ChEBI" id="CHEBI:57597"/>
    </ligand>
</feature>
<feature type="binding site" evidence="1">
    <location>
        <position position="282"/>
    </location>
    <ligand>
        <name>NADPH</name>
        <dbReference type="ChEBI" id="CHEBI:57783"/>
    </ligand>
</feature>
<feature type="binding site" evidence="1">
    <location>
        <position position="284"/>
    </location>
    <ligand>
        <name>NADPH</name>
        <dbReference type="ChEBI" id="CHEBI:57783"/>
    </ligand>
</feature>
<gene>
    <name evidence="1" type="primary">gpsA2</name>
    <name type="synonym">gpdA2</name>
    <name type="ordered locus">MT3060</name>
</gene>
<name>GPDA2_MYCTO</name>
<comment type="function">
    <text evidence="1">Catalyzes the reduction of the glycolytic intermediate dihydroxyacetone phosphate (DHAP) to sn-glycerol 3-phosphate (G3P), the key precursor for phospholipid synthesis.</text>
</comment>
<comment type="catalytic activity">
    <reaction evidence="1">
        <text>sn-glycerol 3-phosphate + NAD(+) = dihydroxyacetone phosphate + NADH + H(+)</text>
        <dbReference type="Rhea" id="RHEA:11092"/>
        <dbReference type="ChEBI" id="CHEBI:15378"/>
        <dbReference type="ChEBI" id="CHEBI:57540"/>
        <dbReference type="ChEBI" id="CHEBI:57597"/>
        <dbReference type="ChEBI" id="CHEBI:57642"/>
        <dbReference type="ChEBI" id="CHEBI:57945"/>
        <dbReference type="EC" id="1.1.1.94"/>
    </reaction>
    <physiologicalReaction direction="right-to-left" evidence="1">
        <dbReference type="Rhea" id="RHEA:11094"/>
    </physiologicalReaction>
</comment>
<comment type="catalytic activity">
    <reaction evidence="1">
        <text>sn-glycerol 3-phosphate + NADP(+) = dihydroxyacetone phosphate + NADPH + H(+)</text>
        <dbReference type="Rhea" id="RHEA:11096"/>
        <dbReference type="ChEBI" id="CHEBI:15378"/>
        <dbReference type="ChEBI" id="CHEBI:57597"/>
        <dbReference type="ChEBI" id="CHEBI:57642"/>
        <dbReference type="ChEBI" id="CHEBI:57783"/>
        <dbReference type="ChEBI" id="CHEBI:58349"/>
        <dbReference type="EC" id="1.1.1.94"/>
    </reaction>
    <physiologicalReaction direction="right-to-left" evidence="1">
        <dbReference type="Rhea" id="RHEA:11098"/>
    </physiologicalReaction>
</comment>
<comment type="pathway">
    <text evidence="1">Membrane lipid metabolism; glycerophospholipid metabolism.</text>
</comment>
<comment type="subcellular location">
    <subcellularLocation>
        <location evidence="1">Cytoplasm</location>
    </subcellularLocation>
</comment>
<comment type="similarity">
    <text evidence="1">Belongs to the NAD-dependent glycerol-3-phosphate dehydrogenase family.</text>
</comment>
<evidence type="ECO:0000255" key="1">
    <source>
        <dbReference type="HAMAP-Rule" id="MF_00394"/>
    </source>
</evidence>
<reference key="1">
    <citation type="journal article" date="2002" name="J. Bacteriol.">
        <title>Whole-genome comparison of Mycobacterium tuberculosis clinical and laboratory strains.</title>
        <authorList>
            <person name="Fleischmann R.D."/>
            <person name="Alland D."/>
            <person name="Eisen J.A."/>
            <person name="Carpenter L."/>
            <person name="White O."/>
            <person name="Peterson J.D."/>
            <person name="DeBoy R.T."/>
            <person name="Dodson R.J."/>
            <person name="Gwinn M.L."/>
            <person name="Haft D.H."/>
            <person name="Hickey E.K."/>
            <person name="Kolonay J.F."/>
            <person name="Nelson W.C."/>
            <person name="Umayam L.A."/>
            <person name="Ermolaeva M.D."/>
            <person name="Salzberg S.L."/>
            <person name="Delcher A."/>
            <person name="Utterback T.R."/>
            <person name="Weidman J.F."/>
            <person name="Khouri H.M."/>
            <person name="Gill J."/>
            <person name="Mikula A."/>
            <person name="Bishai W."/>
            <person name="Jacobs W.R. Jr."/>
            <person name="Venter J.C."/>
            <person name="Fraser C.M."/>
        </authorList>
    </citation>
    <scope>NUCLEOTIDE SEQUENCE [LARGE SCALE GENOMIC DNA]</scope>
    <source>
        <strain>CDC 1551 / Oshkosh</strain>
    </source>
</reference>
<dbReference type="EC" id="1.1.1.94" evidence="1"/>
<dbReference type="EMBL" id="AE000516">
    <property type="protein sequence ID" value="AAK47389.1"/>
    <property type="molecule type" value="Genomic_DNA"/>
</dbReference>
<dbReference type="PIR" id="C70673">
    <property type="entry name" value="C70673"/>
</dbReference>
<dbReference type="RefSeq" id="WP_003415091.1">
    <property type="nucleotide sequence ID" value="NZ_KK341227.1"/>
</dbReference>
<dbReference type="SMR" id="P9WN76"/>
<dbReference type="KEGG" id="mtc:MT3060"/>
<dbReference type="PATRIC" id="fig|83331.31.peg.3303"/>
<dbReference type="HOGENOM" id="CLU_033449_0_2_11"/>
<dbReference type="UniPathway" id="UPA00940"/>
<dbReference type="Proteomes" id="UP000001020">
    <property type="component" value="Chromosome"/>
</dbReference>
<dbReference type="GO" id="GO:0005829">
    <property type="term" value="C:cytosol"/>
    <property type="evidence" value="ECO:0007669"/>
    <property type="project" value="TreeGrafter"/>
</dbReference>
<dbReference type="GO" id="GO:0047952">
    <property type="term" value="F:glycerol-3-phosphate dehydrogenase [NAD(P)+] activity"/>
    <property type="evidence" value="ECO:0007669"/>
    <property type="project" value="UniProtKB-UniRule"/>
</dbReference>
<dbReference type="GO" id="GO:0051287">
    <property type="term" value="F:NAD binding"/>
    <property type="evidence" value="ECO:0007669"/>
    <property type="project" value="InterPro"/>
</dbReference>
<dbReference type="GO" id="GO:0005975">
    <property type="term" value="P:carbohydrate metabolic process"/>
    <property type="evidence" value="ECO:0007669"/>
    <property type="project" value="InterPro"/>
</dbReference>
<dbReference type="GO" id="GO:0046167">
    <property type="term" value="P:glycerol-3-phosphate biosynthetic process"/>
    <property type="evidence" value="ECO:0007669"/>
    <property type="project" value="UniProtKB-UniRule"/>
</dbReference>
<dbReference type="GO" id="GO:0046168">
    <property type="term" value="P:glycerol-3-phosphate catabolic process"/>
    <property type="evidence" value="ECO:0007669"/>
    <property type="project" value="InterPro"/>
</dbReference>
<dbReference type="GO" id="GO:0006650">
    <property type="term" value="P:glycerophospholipid metabolic process"/>
    <property type="evidence" value="ECO:0007669"/>
    <property type="project" value="UniProtKB-UniRule"/>
</dbReference>
<dbReference type="GO" id="GO:0008654">
    <property type="term" value="P:phospholipid biosynthetic process"/>
    <property type="evidence" value="ECO:0007669"/>
    <property type="project" value="UniProtKB-KW"/>
</dbReference>
<dbReference type="FunFam" id="1.10.1040.10:FF:000001">
    <property type="entry name" value="Glycerol-3-phosphate dehydrogenase [NAD(P)+]"/>
    <property type="match status" value="1"/>
</dbReference>
<dbReference type="FunFam" id="3.40.50.720:FF:000019">
    <property type="entry name" value="Glycerol-3-phosphate dehydrogenase [NAD(P)+]"/>
    <property type="match status" value="1"/>
</dbReference>
<dbReference type="Gene3D" id="1.10.1040.10">
    <property type="entry name" value="N-(1-d-carboxylethyl)-l-norvaline Dehydrogenase, domain 2"/>
    <property type="match status" value="1"/>
</dbReference>
<dbReference type="Gene3D" id="3.40.50.720">
    <property type="entry name" value="NAD(P)-binding Rossmann-like Domain"/>
    <property type="match status" value="1"/>
</dbReference>
<dbReference type="HAMAP" id="MF_00394">
    <property type="entry name" value="NAD_Glyc3P_dehydrog"/>
    <property type="match status" value="1"/>
</dbReference>
<dbReference type="InterPro" id="IPR008927">
    <property type="entry name" value="6-PGluconate_DH-like_C_sf"/>
</dbReference>
<dbReference type="InterPro" id="IPR013328">
    <property type="entry name" value="6PGD_dom2"/>
</dbReference>
<dbReference type="InterPro" id="IPR006168">
    <property type="entry name" value="G3P_DH_NAD-dep"/>
</dbReference>
<dbReference type="InterPro" id="IPR006109">
    <property type="entry name" value="G3P_DH_NAD-dep_C"/>
</dbReference>
<dbReference type="InterPro" id="IPR011128">
    <property type="entry name" value="G3P_DH_NAD-dep_N"/>
</dbReference>
<dbReference type="InterPro" id="IPR036291">
    <property type="entry name" value="NAD(P)-bd_dom_sf"/>
</dbReference>
<dbReference type="NCBIfam" id="NF000940">
    <property type="entry name" value="PRK00094.1-2"/>
    <property type="match status" value="1"/>
</dbReference>
<dbReference type="NCBIfam" id="NF000942">
    <property type="entry name" value="PRK00094.1-4"/>
    <property type="match status" value="1"/>
</dbReference>
<dbReference type="PANTHER" id="PTHR11728">
    <property type="entry name" value="GLYCEROL-3-PHOSPHATE DEHYDROGENASE"/>
    <property type="match status" value="1"/>
</dbReference>
<dbReference type="PANTHER" id="PTHR11728:SF1">
    <property type="entry name" value="GLYCEROL-3-PHOSPHATE DEHYDROGENASE [NAD(+)] 2, CHLOROPLASTIC"/>
    <property type="match status" value="1"/>
</dbReference>
<dbReference type="Pfam" id="PF07479">
    <property type="entry name" value="NAD_Gly3P_dh_C"/>
    <property type="match status" value="1"/>
</dbReference>
<dbReference type="Pfam" id="PF01210">
    <property type="entry name" value="NAD_Gly3P_dh_N"/>
    <property type="match status" value="1"/>
</dbReference>
<dbReference type="PIRSF" id="PIRSF000114">
    <property type="entry name" value="Glycerol-3-P_dh"/>
    <property type="match status" value="1"/>
</dbReference>
<dbReference type="PRINTS" id="PR00077">
    <property type="entry name" value="GPDHDRGNASE"/>
</dbReference>
<dbReference type="SUPFAM" id="SSF48179">
    <property type="entry name" value="6-phosphogluconate dehydrogenase C-terminal domain-like"/>
    <property type="match status" value="1"/>
</dbReference>
<dbReference type="SUPFAM" id="SSF51735">
    <property type="entry name" value="NAD(P)-binding Rossmann-fold domains"/>
    <property type="match status" value="1"/>
</dbReference>
<dbReference type="PROSITE" id="PS00957">
    <property type="entry name" value="NAD_G3PDH"/>
    <property type="match status" value="1"/>
</dbReference>
<organism>
    <name type="scientific">Mycobacterium tuberculosis (strain CDC 1551 / Oshkosh)</name>
    <dbReference type="NCBI Taxonomy" id="83331"/>
    <lineage>
        <taxon>Bacteria</taxon>
        <taxon>Bacillati</taxon>
        <taxon>Actinomycetota</taxon>
        <taxon>Actinomycetes</taxon>
        <taxon>Mycobacteriales</taxon>
        <taxon>Mycobacteriaceae</taxon>
        <taxon>Mycobacterium</taxon>
        <taxon>Mycobacterium tuberculosis complex</taxon>
    </lineage>
</organism>